<protein>
    <recommendedName>
        <fullName>GDSL esterase/lipase At1g29670</fullName>
        <ecNumber>3.1.1.-</ecNumber>
    </recommendedName>
    <alternativeName>
        <fullName>Extracellular lipase At1g29670</fullName>
    </alternativeName>
</protein>
<gene>
    <name type="ordered locus">At1g29670</name>
    <name type="ORF">F15D2.22</name>
</gene>
<comment type="subcellular location">
    <subcellularLocation>
        <location evidence="3">Secreted</location>
    </subcellularLocation>
</comment>
<comment type="similarity">
    <text evidence="3">Belongs to the 'GDSL' lipolytic enzyme family.</text>
</comment>
<feature type="signal peptide" evidence="2">
    <location>
        <begin position="1"/>
        <end position="24"/>
    </location>
</feature>
<feature type="chain" id="PRO_0000367357" description="GDSL esterase/lipase At1g29670">
    <location>
        <begin position="25"/>
        <end position="363"/>
    </location>
</feature>
<feature type="active site" description="Nucleophile" evidence="1">
    <location>
        <position position="39"/>
    </location>
</feature>
<feature type="active site" evidence="1">
    <location>
        <position position="327"/>
    </location>
</feature>
<feature type="active site" evidence="1">
    <location>
        <position position="330"/>
    </location>
</feature>
<feature type="sequence conflict" description="In Ref. 4; AAM64368." evidence="3" ref="4">
    <original>A</original>
    <variation>S</variation>
    <location>
        <position position="222"/>
    </location>
</feature>
<name>GDL15_ARATH</name>
<reference key="1">
    <citation type="journal article" date="2000" name="Nature">
        <title>Sequence and analysis of chromosome 1 of the plant Arabidopsis thaliana.</title>
        <authorList>
            <person name="Theologis A."/>
            <person name="Ecker J.R."/>
            <person name="Palm C.J."/>
            <person name="Federspiel N.A."/>
            <person name="Kaul S."/>
            <person name="White O."/>
            <person name="Alonso J."/>
            <person name="Altafi H."/>
            <person name="Araujo R."/>
            <person name="Bowman C.L."/>
            <person name="Brooks S.Y."/>
            <person name="Buehler E."/>
            <person name="Chan A."/>
            <person name="Chao Q."/>
            <person name="Chen H."/>
            <person name="Cheuk R.F."/>
            <person name="Chin C.W."/>
            <person name="Chung M.K."/>
            <person name="Conn L."/>
            <person name="Conway A.B."/>
            <person name="Conway A.R."/>
            <person name="Creasy T.H."/>
            <person name="Dewar K."/>
            <person name="Dunn P."/>
            <person name="Etgu P."/>
            <person name="Feldblyum T.V."/>
            <person name="Feng J.-D."/>
            <person name="Fong B."/>
            <person name="Fujii C.Y."/>
            <person name="Gill J.E."/>
            <person name="Goldsmith A.D."/>
            <person name="Haas B."/>
            <person name="Hansen N.F."/>
            <person name="Hughes B."/>
            <person name="Huizar L."/>
            <person name="Hunter J.L."/>
            <person name="Jenkins J."/>
            <person name="Johnson-Hopson C."/>
            <person name="Khan S."/>
            <person name="Khaykin E."/>
            <person name="Kim C.J."/>
            <person name="Koo H.L."/>
            <person name="Kremenetskaia I."/>
            <person name="Kurtz D.B."/>
            <person name="Kwan A."/>
            <person name="Lam B."/>
            <person name="Langin-Hooper S."/>
            <person name="Lee A."/>
            <person name="Lee J.M."/>
            <person name="Lenz C.A."/>
            <person name="Li J.H."/>
            <person name="Li Y.-P."/>
            <person name="Lin X."/>
            <person name="Liu S.X."/>
            <person name="Liu Z.A."/>
            <person name="Luros J.S."/>
            <person name="Maiti R."/>
            <person name="Marziali A."/>
            <person name="Militscher J."/>
            <person name="Miranda M."/>
            <person name="Nguyen M."/>
            <person name="Nierman W.C."/>
            <person name="Osborne B.I."/>
            <person name="Pai G."/>
            <person name="Peterson J."/>
            <person name="Pham P.K."/>
            <person name="Rizzo M."/>
            <person name="Rooney T."/>
            <person name="Rowley D."/>
            <person name="Sakano H."/>
            <person name="Salzberg S.L."/>
            <person name="Schwartz J.R."/>
            <person name="Shinn P."/>
            <person name="Southwick A.M."/>
            <person name="Sun H."/>
            <person name="Tallon L.J."/>
            <person name="Tambunga G."/>
            <person name="Toriumi M.J."/>
            <person name="Town C.D."/>
            <person name="Utterback T."/>
            <person name="Van Aken S."/>
            <person name="Vaysberg M."/>
            <person name="Vysotskaia V.S."/>
            <person name="Walker M."/>
            <person name="Wu D."/>
            <person name="Yu G."/>
            <person name="Fraser C.M."/>
            <person name="Venter J.C."/>
            <person name="Davis R.W."/>
        </authorList>
    </citation>
    <scope>NUCLEOTIDE SEQUENCE [LARGE SCALE GENOMIC DNA]</scope>
    <source>
        <strain>cv. Columbia</strain>
    </source>
</reference>
<reference key="2">
    <citation type="journal article" date="2017" name="Plant J.">
        <title>Araport11: a complete reannotation of the Arabidopsis thaliana reference genome.</title>
        <authorList>
            <person name="Cheng C.Y."/>
            <person name="Krishnakumar V."/>
            <person name="Chan A.P."/>
            <person name="Thibaud-Nissen F."/>
            <person name="Schobel S."/>
            <person name="Town C.D."/>
        </authorList>
    </citation>
    <scope>GENOME REANNOTATION</scope>
    <source>
        <strain>cv. Columbia</strain>
    </source>
</reference>
<reference key="3">
    <citation type="journal article" date="2003" name="Science">
        <title>Empirical analysis of transcriptional activity in the Arabidopsis genome.</title>
        <authorList>
            <person name="Yamada K."/>
            <person name="Lim J."/>
            <person name="Dale J.M."/>
            <person name="Chen H."/>
            <person name="Shinn P."/>
            <person name="Palm C.J."/>
            <person name="Southwick A.M."/>
            <person name="Wu H.C."/>
            <person name="Kim C.J."/>
            <person name="Nguyen M."/>
            <person name="Pham P.K."/>
            <person name="Cheuk R.F."/>
            <person name="Karlin-Newmann G."/>
            <person name="Liu S.X."/>
            <person name="Lam B."/>
            <person name="Sakano H."/>
            <person name="Wu T."/>
            <person name="Yu G."/>
            <person name="Miranda M."/>
            <person name="Quach H.L."/>
            <person name="Tripp M."/>
            <person name="Chang C.H."/>
            <person name="Lee J.M."/>
            <person name="Toriumi M.J."/>
            <person name="Chan M.M."/>
            <person name="Tang C.C."/>
            <person name="Onodera C.S."/>
            <person name="Deng J.M."/>
            <person name="Akiyama K."/>
            <person name="Ansari Y."/>
            <person name="Arakawa T."/>
            <person name="Banh J."/>
            <person name="Banno F."/>
            <person name="Bowser L."/>
            <person name="Brooks S.Y."/>
            <person name="Carninci P."/>
            <person name="Chao Q."/>
            <person name="Choy N."/>
            <person name="Enju A."/>
            <person name="Goldsmith A.D."/>
            <person name="Gurjal M."/>
            <person name="Hansen N.F."/>
            <person name="Hayashizaki Y."/>
            <person name="Johnson-Hopson C."/>
            <person name="Hsuan V.W."/>
            <person name="Iida K."/>
            <person name="Karnes M."/>
            <person name="Khan S."/>
            <person name="Koesema E."/>
            <person name="Ishida J."/>
            <person name="Jiang P.X."/>
            <person name="Jones T."/>
            <person name="Kawai J."/>
            <person name="Kamiya A."/>
            <person name="Meyers C."/>
            <person name="Nakajima M."/>
            <person name="Narusaka M."/>
            <person name="Seki M."/>
            <person name="Sakurai T."/>
            <person name="Satou M."/>
            <person name="Tamse R."/>
            <person name="Vaysberg M."/>
            <person name="Wallender E.K."/>
            <person name="Wong C."/>
            <person name="Yamamura Y."/>
            <person name="Yuan S."/>
            <person name="Shinozaki K."/>
            <person name="Davis R.W."/>
            <person name="Theologis A."/>
            <person name="Ecker J.R."/>
        </authorList>
    </citation>
    <scope>NUCLEOTIDE SEQUENCE [LARGE SCALE MRNA]</scope>
    <source>
        <strain>cv. Columbia</strain>
    </source>
</reference>
<reference key="4">
    <citation type="submission" date="2002-03" db="EMBL/GenBank/DDBJ databases">
        <title>Full-length cDNA from Arabidopsis thaliana.</title>
        <authorList>
            <person name="Brover V.V."/>
            <person name="Troukhan M.E."/>
            <person name="Alexandrov N.A."/>
            <person name="Lu Y.-P."/>
            <person name="Flavell R.B."/>
            <person name="Feldmann K.A."/>
        </authorList>
    </citation>
    <scope>NUCLEOTIDE SEQUENCE [LARGE SCALE MRNA]</scope>
</reference>
<reference key="5">
    <citation type="journal article" date="2004" name="Prog. Lipid Res.">
        <title>GDSL family of serine esterases/lipases.</title>
        <authorList>
            <person name="Akoh C.C."/>
            <person name="Lee G.-C."/>
            <person name="Liaw Y.-C."/>
            <person name="Huang T.-H."/>
            <person name="Shaw J.-F."/>
        </authorList>
    </citation>
    <scope>REVIEW</scope>
</reference>
<reference key="6">
    <citation type="journal article" date="2008" name="Pak. J. Biol. Sci.">
        <title>Sequence analysis of GDSL lipase gene family in Arabidopsis thaliana.</title>
        <authorList>
            <person name="Ling H."/>
        </authorList>
    </citation>
    <scope>GENE FAMILY</scope>
</reference>
<sequence length="363" mass="39872">MESYLTKWCVVLVLLCFGFSVVKAQAQAQVPCFFVFGDSLVDNGNNNGLISIARSNYFPYGIDFGGPTGRFSNGKTTVDVIAELLGFNGYIPAYNTVSGRQILSGVNYASAAAGIREETGRQLGQRISFSGQVRNYQTTVSQVVQLLGDETRAADYLKRCIYSVGLGSNDYLNNYFMPTFYSSSRQFTPEQYANDLISRYSTQLNALYNYGARKFALSGIGAVGCSPNALAGSPDGRTCVDRINSANQIFNNKLRSLVDQLNNNHPDAKFIYINAYGIFQDMITNPARFGFRVTNAGCCGIGRNAGQITCLPGQRPCRDRNAYVFWDAFHPTEAANVIIARRSYNAQSASDAYPMDISRLAQL</sequence>
<accession>Q9C7N4</accession>
<accession>Q8LD01</accession>
<keyword id="KW-0378">Hydrolase</keyword>
<keyword id="KW-0442">Lipid degradation</keyword>
<keyword id="KW-0443">Lipid metabolism</keyword>
<keyword id="KW-1185">Reference proteome</keyword>
<keyword id="KW-0964">Secreted</keyword>
<keyword id="KW-0732">Signal</keyword>
<dbReference type="EC" id="3.1.1.-"/>
<dbReference type="EMBL" id="AC068667">
    <property type="protein sequence ID" value="AAG51758.1"/>
    <property type="molecule type" value="Genomic_DNA"/>
</dbReference>
<dbReference type="EMBL" id="CP002684">
    <property type="protein sequence ID" value="AEE31116.1"/>
    <property type="molecule type" value="Genomic_DNA"/>
</dbReference>
<dbReference type="EMBL" id="AY065046">
    <property type="protein sequence ID" value="AAL57681.1"/>
    <property type="molecule type" value="mRNA"/>
</dbReference>
<dbReference type="EMBL" id="AY086296">
    <property type="protein sequence ID" value="AAM64368.1"/>
    <property type="molecule type" value="mRNA"/>
</dbReference>
<dbReference type="PIR" id="A86420">
    <property type="entry name" value="A86420"/>
</dbReference>
<dbReference type="RefSeq" id="NP_174260.1">
    <property type="nucleotide sequence ID" value="NM_102707.5"/>
</dbReference>
<dbReference type="SMR" id="Q9C7N4"/>
<dbReference type="BioGRID" id="25079">
    <property type="interactions" value="3"/>
</dbReference>
<dbReference type="FunCoup" id="Q9C7N4">
    <property type="interactions" value="269"/>
</dbReference>
<dbReference type="STRING" id="3702.Q9C7N4"/>
<dbReference type="iPTMnet" id="Q9C7N4"/>
<dbReference type="PaxDb" id="3702-AT1G29670.1"/>
<dbReference type="ProteomicsDB" id="221965"/>
<dbReference type="EnsemblPlants" id="AT1G29670.1">
    <property type="protein sequence ID" value="AT1G29670.1"/>
    <property type="gene ID" value="AT1G29670"/>
</dbReference>
<dbReference type="GeneID" id="839844"/>
<dbReference type="Gramene" id="AT1G29670.1">
    <property type="protein sequence ID" value="AT1G29670.1"/>
    <property type="gene ID" value="AT1G29670"/>
</dbReference>
<dbReference type="KEGG" id="ath:AT1G29670"/>
<dbReference type="Araport" id="AT1G29670"/>
<dbReference type="TAIR" id="AT1G29670">
    <property type="gene designation" value="GDSL1"/>
</dbReference>
<dbReference type="eggNOG" id="KOG0017">
    <property type="taxonomic scope" value="Eukaryota"/>
</dbReference>
<dbReference type="HOGENOM" id="CLU_015101_0_0_1"/>
<dbReference type="InParanoid" id="Q9C7N4"/>
<dbReference type="OMA" id="DRRTCDE"/>
<dbReference type="OrthoDB" id="1600564at2759"/>
<dbReference type="PhylomeDB" id="Q9C7N4"/>
<dbReference type="PRO" id="PR:Q9C7N4"/>
<dbReference type="Proteomes" id="UP000006548">
    <property type="component" value="Chromosome 1"/>
</dbReference>
<dbReference type="ExpressionAtlas" id="Q9C7N4">
    <property type="expression patterns" value="baseline and differential"/>
</dbReference>
<dbReference type="GO" id="GO:0048046">
    <property type="term" value="C:apoplast"/>
    <property type="evidence" value="ECO:0007005"/>
    <property type="project" value="TAIR"/>
</dbReference>
<dbReference type="GO" id="GO:0009534">
    <property type="term" value="C:chloroplast thylakoid"/>
    <property type="evidence" value="ECO:0007005"/>
    <property type="project" value="TAIR"/>
</dbReference>
<dbReference type="GO" id="GO:0005634">
    <property type="term" value="C:nucleus"/>
    <property type="evidence" value="ECO:0007005"/>
    <property type="project" value="TAIR"/>
</dbReference>
<dbReference type="GO" id="GO:0016788">
    <property type="term" value="F:hydrolase activity, acting on ester bonds"/>
    <property type="evidence" value="ECO:0007669"/>
    <property type="project" value="InterPro"/>
</dbReference>
<dbReference type="GO" id="GO:0016042">
    <property type="term" value="P:lipid catabolic process"/>
    <property type="evidence" value="ECO:0007669"/>
    <property type="project" value="UniProtKB-KW"/>
</dbReference>
<dbReference type="CDD" id="cd01837">
    <property type="entry name" value="SGNH_plant_lipase_like"/>
    <property type="match status" value="1"/>
</dbReference>
<dbReference type="FunFam" id="3.40.50.1110:FF:000003">
    <property type="entry name" value="GDSL esterase/lipase APG"/>
    <property type="match status" value="1"/>
</dbReference>
<dbReference type="Gene3D" id="3.40.50.1110">
    <property type="entry name" value="SGNH hydrolase"/>
    <property type="match status" value="1"/>
</dbReference>
<dbReference type="InterPro" id="IPR001087">
    <property type="entry name" value="GDSL"/>
</dbReference>
<dbReference type="InterPro" id="IPR051238">
    <property type="entry name" value="GDSL_esterase/lipase"/>
</dbReference>
<dbReference type="InterPro" id="IPR036514">
    <property type="entry name" value="SGNH_hydro_sf"/>
</dbReference>
<dbReference type="InterPro" id="IPR035669">
    <property type="entry name" value="SGNH_plant_lipase-like"/>
</dbReference>
<dbReference type="PANTHER" id="PTHR45650:SF67">
    <property type="entry name" value="(RAPE) HYPOTHETICAL PROTEIN"/>
    <property type="match status" value="1"/>
</dbReference>
<dbReference type="PANTHER" id="PTHR45650">
    <property type="entry name" value="GDSL-LIKE LIPASE/ACYLHYDROLASE-RELATED"/>
    <property type="match status" value="1"/>
</dbReference>
<dbReference type="Pfam" id="PF00657">
    <property type="entry name" value="Lipase_GDSL"/>
    <property type="match status" value="1"/>
</dbReference>
<dbReference type="SUPFAM" id="SSF52266">
    <property type="entry name" value="SGNH hydrolase"/>
    <property type="match status" value="1"/>
</dbReference>
<evidence type="ECO:0000250" key="1"/>
<evidence type="ECO:0000255" key="2"/>
<evidence type="ECO:0000305" key="3"/>
<proteinExistence type="evidence at transcript level"/>
<organism>
    <name type="scientific">Arabidopsis thaliana</name>
    <name type="common">Mouse-ear cress</name>
    <dbReference type="NCBI Taxonomy" id="3702"/>
    <lineage>
        <taxon>Eukaryota</taxon>
        <taxon>Viridiplantae</taxon>
        <taxon>Streptophyta</taxon>
        <taxon>Embryophyta</taxon>
        <taxon>Tracheophyta</taxon>
        <taxon>Spermatophyta</taxon>
        <taxon>Magnoliopsida</taxon>
        <taxon>eudicotyledons</taxon>
        <taxon>Gunneridae</taxon>
        <taxon>Pentapetalae</taxon>
        <taxon>rosids</taxon>
        <taxon>malvids</taxon>
        <taxon>Brassicales</taxon>
        <taxon>Brassicaceae</taxon>
        <taxon>Camelineae</taxon>
        <taxon>Arabidopsis</taxon>
    </lineage>
</organism>